<proteinExistence type="inferred from homology"/>
<gene>
    <name evidence="2" type="primary">trmB</name>
    <name type="ordered locus">ECP_2954</name>
</gene>
<organism>
    <name type="scientific">Escherichia coli O6:K15:H31 (strain 536 / UPEC)</name>
    <dbReference type="NCBI Taxonomy" id="362663"/>
    <lineage>
        <taxon>Bacteria</taxon>
        <taxon>Pseudomonadati</taxon>
        <taxon>Pseudomonadota</taxon>
        <taxon>Gammaproteobacteria</taxon>
        <taxon>Enterobacterales</taxon>
        <taxon>Enterobacteriaceae</taxon>
        <taxon>Escherichia</taxon>
    </lineage>
</organism>
<reference key="1">
    <citation type="journal article" date="2006" name="Mol. Microbiol.">
        <title>Role of pathogenicity island-associated integrases in the genome plasticity of uropathogenic Escherichia coli strain 536.</title>
        <authorList>
            <person name="Hochhut B."/>
            <person name="Wilde C."/>
            <person name="Balling G."/>
            <person name="Middendorf B."/>
            <person name="Dobrindt U."/>
            <person name="Brzuszkiewicz E."/>
            <person name="Gottschalk G."/>
            <person name="Carniel E."/>
            <person name="Hacker J."/>
        </authorList>
    </citation>
    <scope>NUCLEOTIDE SEQUENCE [LARGE SCALE GENOMIC DNA]</scope>
    <source>
        <strain>536 / UPEC</strain>
    </source>
</reference>
<evidence type="ECO:0000250" key="1"/>
<evidence type="ECO:0000255" key="2">
    <source>
        <dbReference type="HAMAP-Rule" id="MF_01057"/>
    </source>
</evidence>
<name>TRMB_ECOL5</name>
<accession>Q0TDP1</accession>
<comment type="function">
    <text evidence="2">Catalyzes the formation of N(7)-methylguanine at position 46 (m7G46) in tRNA.</text>
</comment>
<comment type="catalytic activity">
    <reaction evidence="2">
        <text>guanosine(46) in tRNA + S-adenosyl-L-methionine = N(7)-methylguanosine(46) in tRNA + S-adenosyl-L-homocysteine</text>
        <dbReference type="Rhea" id="RHEA:42708"/>
        <dbReference type="Rhea" id="RHEA-COMP:10188"/>
        <dbReference type="Rhea" id="RHEA-COMP:10189"/>
        <dbReference type="ChEBI" id="CHEBI:57856"/>
        <dbReference type="ChEBI" id="CHEBI:59789"/>
        <dbReference type="ChEBI" id="CHEBI:74269"/>
        <dbReference type="ChEBI" id="CHEBI:74480"/>
        <dbReference type="EC" id="2.1.1.33"/>
    </reaction>
</comment>
<comment type="pathway">
    <text evidence="2">tRNA modification; N(7)-methylguanine-tRNA biosynthesis.</text>
</comment>
<comment type="subunit">
    <text evidence="2">Monomer.</text>
</comment>
<comment type="similarity">
    <text evidence="2">Belongs to the class I-like SAM-binding methyltransferase superfamily. TrmB family.</text>
</comment>
<dbReference type="EC" id="2.1.1.33" evidence="2"/>
<dbReference type="EMBL" id="CP000247">
    <property type="protein sequence ID" value="ABG70938.1"/>
    <property type="molecule type" value="Genomic_DNA"/>
</dbReference>
<dbReference type="RefSeq" id="WP_000786905.1">
    <property type="nucleotide sequence ID" value="NC_008253.1"/>
</dbReference>
<dbReference type="SMR" id="Q0TDP1"/>
<dbReference type="KEGG" id="ecp:ECP_2954"/>
<dbReference type="HOGENOM" id="CLU_050910_0_1_6"/>
<dbReference type="UniPathway" id="UPA00989"/>
<dbReference type="Proteomes" id="UP000009182">
    <property type="component" value="Chromosome"/>
</dbReference>
<dbReference type="GO" id="GO:0043527">
    <property type="term" value="C:tRNA methyltransferase complex"/>
    <property type="evidence" value="ECO:0007669"/>
    <property type="project" value="TreeGrafter"/>
</dbReference>
<dbReference type="GO" id="GO:0008176">
    <property type="term" value="F:tRNA (guanine(46)-N7)-methyltransferase activity"/>
    <property type="evidence" value="ECO:0007669"/>
    <property type="project" value="UniProtKB-UniRule"/>
</dbReference>
<dbReference type="FunFam" id="3.40.50.150:FF:000024">
    <property type="entry name" value="tRNA (guanine-N(7)-)-methyltransferase"/>
    <property type="match status" value="1"/>
</dbReference>
<dbReference type="Gene3D" id="3.40.50.150">
    <property type="entry name" value="Vaccinia Virus protein VP39"/>
    <property type="match status" value="1"/>
</dbReference>
<dbReference type="HAMAP" id="MF_01057">
    <property type="entry name" value="tRNA_methyltr_TrmB"/>
    <property type="match status" value="1"/>
</dbReference>
<dbReference type="InterPro" id="IPR029063">
    <property type="entry name" value="SAM-dependent_MTases_sf"/>
</dbReference>
<dbReference type="InterPro" id="IPR003358">
    <property type="entry name" value="tRNA_(Gua-N-7)_MeTrfase_Trmb"/>
</dbReference>
<dbReference type="InterPro" id="IPR055361">
    <property type="entry name" value="tRNA_methyltr_TrmB_bact"/>
</dbReference>
<dbReference type="NCBIfam" id="TIGR00091">
    <property type="entry name" value="tRNA (guanosine(46)-N7)-methyltransferase TrmB"/>
    <property type="match status" value="1"/>
</dbReference>
<dbReference type="PANTHER" id="PTHR23417">
    <property type="entry name" value="3-DEOXY-D-MANNO-OCTULOSONIC-ACID TRANSFERASE/TRNA GUANINE-N 7 - -METHYLTRANSFERASE"/>
    <property type="match status" value="1"/>
</dbReference>
<dbReference type="PANTHER" id="PTHR23417:SF14">
    <property type="entry name" value="PENTACOTRIPEPTIDE-REPEAT REGION OF PRORP DOMAIN-CONTAINING PROTEIN"/>
    <property type="match status" value="1"/>
</dbReference>
<dbReference type="Pfam" id="PF02390">
    <property type="entry name" value="Methyltransf_4"/>
    <property type="match status" value="1"/>
</dbReference>
<dbReference type="SUPFAM" id="SSF53335">
    <property type="entry name" value="S-adenosyl-L-methionine-dependent methyltransferases"/>
    <property type="match status" value="1"/>
</dbReference>
<dbReference type="PROSITE" id="PS51625">
    <property type="entry name" value="SAM_MT_TRMB"/>
    <property type="match status" value="1"/>
</dbReference>
<feature type="chain" id="PRO_0000288149" description="tRNA (guanine-N(7)-)-methyltransferase">
    <location>
        <begin position="1"/>
        <end position="239"/>
    </location>
</feature>
<feature type="region of interest" description="Interaction with RNA" evidence="2">
    <location>
        <begin position="150"/>
        <end position="155"/>
    </location>
</feature>
<feature type="active site" evidence="1">
    <location>
        <position position="144"/>
    </location>
</feature>
<feature type="binding site" evidence="2">
    <location>
        <position position="69"/>
    </location>
    <ligand>
        <name>S-adenosyl-L-methionine</name>
        <dbReference type="ChEBI" id="CHEBI:59789"/>
    </ligand>
</feature>
<feature type="binding site" evidence="2">
    <location>
        <position position="94"/>
    </location>
    <ligand>
        <name>S-adenosyl-L-methionine</name>
        <dbReference type="ChEBI" id="CHEBI:59789"/>
    </ligand>
</feature>
<feature type="binding site" evidence="2">
    <location>
        <position position="121"/>
    </location>
    <ligand>
        <name>S-adenosyl-L-methionine</name>
        <dbReference type="ChEBI" id="CHEBI:59789"/>
    </ligand>
</feature>
<feature type="binding site" evidence="2">
    <location>
        <position position="144"/>
    </location>
    <ligand>
        <name>S-adenosyl-L-methionine</name>
        <dbReference type="ChEBI" id="CHEBI:59789"/>
    </ligand>
</feature>
<feature type="binding site" evidence="2">
    <location>
        <position position="148"/>
    </location>
    <ligand>
        <name>substrate</name>
    </ligand>
</feature>
<feature type="binding site" evidence="2">
    <location>
        <position position="180"/>
    </location>
    <ligand>
        <name>substrate</name>
    </ligand>
</feature>
<feature type="binding site" evidence="2">
    <location>
        <begin position="217"/>
        <end position="220"/>
    </location>
    <ligand>
        <name>substrate</name>
    </ligand>
</feature>
<sequence>MKNDVISPEFDENGRPLRRIRSFVRRQGRLTKGQEHALENYWPVMGVEFSEDMLDFPALFGREAPVTLEIGFGMGASLVAMAKDRPEQDFLGIEVHSPGVGACLASAHEEGLSNLRVMCHDAVEVLHKMIPDNSLRMVQLFFPDPWHKARHNKRRIIQVPFAELVKSKLQLGGIFHMATDWEPYAEHMLEVMSSIDGYKNLSESNDYVPRPASRPVTKFEQRGHRLGHGVWDLMFERVK</sequence>
<protein>
    <recommendedName>
        <fullName evidence="2">tRNA (guanine-N(7)-)-methyltransferase</fullName>
        <ecNumber evidence="2">2.1.1.33</ecNumber>
    </recommendedName>
    <alternativeName>
        <fullName evidence="2">tRNA (guanine(46)-N(7))-methyltransferase</fullName>
    </alternativeName>
    <alternativeName>
        <fullName evidence="2">tRNA(m7G46)-methyltransferase</fullName>
    </alternativeName>
</protein>
<keyword id="KW-0489">Methyltransferase</keyword>
<keyword id="KW-0949">S-adenosyl-L-methionine</keyword>
<keyword id="KW-0808">Transferase</keyword>
<keyword id="KW-0819">tRNA processing</keyword>